<dbReference type="EMBL" id="CP000886">
    <property type="protein sequence ID" value="ABX71026.1"/>
    <property type="molecule type" value="Genomic_DNA"/>
</dbReference>
<dbReference type="RefSeq" id="WP_000192004.1">
    <property type="nucleotide sequence ID" value="NC_010102.1"/>
</dbReference>
<dbReference type="SMR" id="A9N7F3"/>
<dbReference type="KEGG" id="spq:SPAB_05761"/>
<dbReference type="PATRIC" id="fig|1016998.12.peg.5398"/>
<dbReference type="HOGENOM" id="CLU_147939_0_0_6"/>
<dbReference type="BioCyc" id="SENT1016998:SPAB_RS23510-MONOMER"/>
<dbReference type="Proteomes" id="UP000008556">
    <property type="component" value="Chromosome"/>
</dbReference>
<dbReference type="GO" id="GO:0005737">
    <property type="term" value="C:cytoplasm"/>
    <property type="evidence" value="ECO:0007669"/>
    <property type="project" value="UniProtKB-SubCell"/>
</dbReference>
<dbReference type="GO" id="GO:0003700">
    <property type="term" value="F:DNA-binding transcription factor activity"/>
    <property type="evidence" value="ECO:0007669"/>
    <property type="project" value="InterPro"/>
</dbReference>
<dbReference type="GO" id="GO:0043565">
    <property type="term" value="F:sequence-specific DNA binding"/>
    <property type="evidence" value="ECO:0007669"/>
    <property type="project" value="InterPro"/>
</dbReference>
<dbReference type="GO" id="GO:0045892">
    <property type="term" value="P:negative regulation of DNA-templated transcription"/>
    <property type="evidence" value="ECO:0007669"/>
    <property type="project" value="UniProtKB-UniRule"/>
</dbReference>
<dbReference type="FunFam" id="1.10.1270.10:FF:000001">
    <property type="entry name" value="Trp operon repressor"/>
    <property type="match status" value="1"/>
</dbReference>
<dbReference type="Gene3D" id="1.10.1270.10">
    <property type="entry name" value="TrpR-like"/>
    <property type="match status" value="1"/>
</dbReference>
<dbReference type="HAMAP" id="MF_00475">
    <property type="entry name" value="Trp_repressor"/>
    <property type="match status" value="1"/>
</dbReference>
<dbReference type="InterPro" id="IPR000831">
    <property type="entry name" value="Trp_repress"/>
</dbReference>
<dbReference type="InterPro" id="IPR013335">
    <property type="entry name" value="Trp_repress_bac"/>
</dbReference>
<dbReference type="InterPro" id="IPR010921">
    <property type="entry name" value="Trp_repressor/repl_initiator"/>
</dbReference>
<dbReference type="InterPro" id="IPR038116">
    <property type="entry name" value="TrpR-like_sf"/>
</dbReference>
<dbReference type="NCBIfam" id="TIGR01321">
    <property type="entry name" value="TrpR"/>
    <property type="match status" value="1"/>
</dbReference>
<dbReference type="PANTHER" id="PTHR38025">
    <property type="entry name" value="TRP OPERON REPRESSOR"/>
    <property type="match status" value="1"/>
</dbReference>
<dbReference type="PANTHER" id="PTHR38025:SF1">
    <property type="entry name" value="TRP OPERON REPRESSOR"/>
    <property type="match status" value="1"/>
</dbReference>
<dbReference type="Pfam" id="PF01371">
    <property type="entry name" value="Trp_repressor"/>
    <property type="match status" value="1"/>
</dbReference>
<dbReference type="PIRSF" id="PIRSF003196">
    <property type="entry name" value="Trp_repressor"/>
    <property type="match status" value="1"/>
</dbReference>
<dbReference type="SUPFAM" id="SSF48295">
    <property type="entry name" value="TrpR-like"/>
    <property type="match status" value="1"/>
</dbReference>
<feature type="chain" id="PRO_1000081256" description="Trp operon repressor">
    <location>
        <begin position="1"/>
        <end position="108"/>
    </location>
</feature>
<feature type="DNA-binding region" evidence="1">
    <location>
        <begin position="68"/>
        <end position="91"/>
    </location>
</feature>
<comment type="function">
    <text evidence="1">This protein is an aporepressor. When complexed with L-tryptophan it binds the operator region of the trp operon (5'-ACTAGT-'3') and prevents the initiation of transcription. The complex also regulates trp repressor biosynthesis by binding to its regulatory region.</text>
</comment>
<comment type="subunit">
    <text evidence="1">Homodimer.</text>
</comment>
<comment type="subcellular location">
    <subcellularLocation>
        <location evidence="1">Cytoplasm</location>
    </subcellularLocation>
</comment>
<comment type="similarity">
    <text evidence="1">Belongs to the TrpR family.</text>
</comment>
<name>TRPR_SALPB</name>
<protein>
    <recommendedName>
        <fullName evidence="1">Trp operon repressor</fullName>
    </recommendedName>
</protein>
<evidence type="ECO:0000255" key="1">
    <source>
        <dbReference type="HAMAP-Rule" id="MF_00475"/>
    </source>
</evidence>
<accession>A9N7F3</accession>
<keyword id="KW-0963">Cytoplasm</keyword>
<keyword id="KW-0238">DNA-binding</keyword>
<keyword id="KW-0678">Repressor</keyword>
<keyword id="KW-0804">Transcription</keyword>
<keyword id="KW-0805">Transcription regulation</keyword>
<proteinExistence type="inferred from homology"/>
<organism>
    <name type="scientific">Salmonella paratyphi B (strain ATCC BAA-1250 / SPB7)</name>
    <dbReference type="NCBI Taxonomy" id="1016998"/>
    <lineage>
        <taxon>Bacteria</taxon>
        <taxon>Pseudomonadati</taxon>
        <taxon>Pseudomonadota</taxon>
        <taxon>Gammaproteobacteria</taxon>
        <taxon>Enterobacterales</taxon>
        <taxon>Enterobacteriaceae</taxon>
        <taxon>Salmonella</taxon>
    </lineage>
</organism>
<reference key="1">
    <citation type="submission" date="2007-11" db="EMBL/GenBank/DDBJ databases">
        <authorList>
            <consortium name="The Salmonella enterica serovar Paratyphi B Genome Sequencing Project"/>
            <person name="McClelland M."/>
            <person name="Sanderson E.K."/>
            <person name="Porwollik S."/>
            <person name="Spieth J."/>
            <person name="Clifton W.S."/>
            <person name="Fulton R."/>
            <person name="Cordes M."/>
            <person name="Wollam A."/>
            <person name="Shah N."/>
            <person name="Pepin K."/>
            <person name="Bhonagiri V."/>
            <person name="Nash W."/>
            <person name="Johnson M."/>
            <person name="Thiruvilangam P."/>
            <person name="Wilson R."/>
        </authorList>
    </citation>
    <scope>NUCLEOTIDE SEQUENCE [LARGE SCALE GENOMIC DNA]</scope>
    <source>
        <strain>ATCC BAA-1250 / SPB7</strain>
    </source>
</reference>
<gene>
    <name evidence="1" type="primary">trpR</name>
    <name type="ordered locus">SPAB_05761</name>
</gene>
<sequence>MTQHSPYSSAIAEQRNQEWLRFVELLRQAYAEDLHLPLLQLMLTPDEREALGTRVRIIEELLRGEMSQRELKTELGAGIATITRGSNSLKSAPVELRHWLENVLLKSA</sequence>